<sequence>MGNQMSVPLRPGDQEHDPGADTCKVTSDNECVQNGNPVVLSTRVIQHYEEVDLGISSSKDNVATSSPKTMEAQAVGDASGKNLGKEAKTKAPAARSHFFLTLSRPVPGRPGDQGTDSSAASGRFDVSPSAAPENKDPSEHGALPVAAAPGQAPDKTPGCPEAKQQTLPATGPLAPSPPESQAEAPAQDKDFGFLNRFFKLDKGRESAPVNSQPKEAKGSEDPEQATEAPAVPGNPHGVSAGEDIVDSEQRGQDVDTLSYSVPGDPEVPGTTKEDPQVVDTTENSSSIMSFFKTLVSPNKTETKKDPEDTKATKADSVCDGHAAGQKMSETQAKSKKKRLDSPRLGLSFRKLFRHKDTENSPTTSANLKSDKANFTPQETRGKTKATKSCSPPPPPPEPTSEGRDSGKEKAGPTSLPLGKLFWKKSVKEDTLSTGAEENAVCESPVETVRLEEVESSLQTVDLSEETQPEPTDVKVKEESKPRKTPLMAFLRQMSVRSSEGIPRSEESNVKDSSCQTSNSVEKTPSPPEPEPAGTAQKNKETSSSKDKKSVDKKSATENSKQKNGKQEVREPAPCVQPPTVEANAMQTGDKTPKKSEKRRQSLGGFLKGLGPKRMSDAQVQTDPVSIGPVGKSK</sequence>
<reference key="1">
    <citation type="journal article" date="2003" name="Exp. Cell Res.">
        <title>Characterization of the novel amplified in breast cancer-1 (NABC1) gene product.</title>
        <authorList>
            <person name="Beardsley D.I."/>
            <person name="Kowbel D."/>
            <person name="Lataxes T.A."/>
            <person name="Mannino J.M."/>
            <person name="Xin H."/>
            <person name="Kim W.-J."/>
            <person name="Collins C."/>
            <person name="Brown K.D."/>
        </authorList>
    </citation>
    <scope>NUCLEOTIDE SEQUENCE [MRNA]</scope>
</reference>
<reference key="2">
    <citation type="journal article" date="2009" name="PLoS Biol.">
        <title>Lineage-specific biology revealed by a finished genome assembly of the mouse.</title>
        <authorList>
            <person name="Church D.M."/>
            <person name="Goodstadt L."/>
            <person name="Hillier L.W."/>
            <person name="Zody M.C."/>
            <person name="Goldstein S."/>
            <person name="She X."/>
            <person name="Bult C.J."/>
            <person name="Agarwala R."/>
            <person name="Cherry J.L."/>
            <person name="DiCuccio M."/>
            <person name="Hlavina W."/>
            <person name="Kapustin Y."/>
            <person name="Meric P."/>
            <person name="Maglott D."/>
            <person name="Birtle Z."/>
            <person name="Marques A.C."/>
            <person name="Graves T."/>
            <person name="Zhou S."/>
            <person name="Teague B."/>
            <person name="Potamousis K."/>
            <person name="Churas C."/>
            <person name="Place M."/>
            <person name="Herschleb J."/>
            <person name="Runnheim R."/>
            <person name="Forrest D."/>
            <person name="Amos-Landgraf J."/>
            <person name="Schwartz D.C."/>
            <person name="Cheng Z."/>
            <person name="Lindblad-Toh K."/>
            <person name="Eichler E.E."/>
            <person name="Ponting C.P."/>
        </authorList>
    </citation>
    <scope>NUCLEOTIDE SEQUENCE [LARGE SCALE GENOMIC DNA]</scope>
    <source>
        <strain>C57BL/6J</strain>
    </source>
</reference>
<reference key="3">
    <citation type="journal article" date="2005" name="Science">
        <title>The transcriptional landscape of the mammalian genome.</title>
        <authorList>
            <person name="Carninci P."/>
            <person name="Kasukawa T."/>
            <person name="Katayama S."/>
            <person name="Gough J."/>
            <person name="Frith M.C."/>
            <person name="Maeda N."/>
            <person name="Oyama R."/>
            <person name="Ravasi T."/>
            <person name="Lenhard B."/>
            <person name="Wells C."/>
            <person name="Kodzius R."/>
            <person name="Shimokawa K."/>
            <person name="Bajic V.B."/>
            <person name="Brenner S.E."/>
            <person name="Batalov S."/>
            <person name="Forrest A.R."/>
            <person name="Zavolan M."/>
            <person name="Davis M.J."/>
            <person name="Wilming L.G."/>
            <person name="Aidinis V."/>
            <person name="Allen J.E."/>
            <person name="Ambesi-Impiombato A."/>
            <person name="Apweiler R."/>
            <person name="Aturaliya R.N."/>
            <person name="Bailey T.L."/>
            <person name="Bansal M."/>
            <person name="Baxter L."/>
            <person name="Beisel K.W."/>
            <person name="Bersano T."/>
            <person name="Bono H."/>
            <person name="Chalk A.M."/>
            <person name="Chiu K.P."/>
            <person name="Choudhary V."/>
            <person name="Christoffels A."/>
            <person name="Clutterbuck D.R."/>
            <person name="Crowe M.L."/>
            <person name="Dalla E."/>
            <person name="Dalrymple B.P."/>
            <person name="de Bono B."/>
            <person name="Della Gatta G."/>
            <person name="di Bernardo D."/>
            <person name="Down T."/>
            <person name="Engstrom P."/>
            <person name="Fagiolini M."/>
            <person name="Faulkner G."/>
            <person name="Fletcher C.F."/>
            <person name="Fukushima T."/>
            <person name="Furuno M."/>
            <person name="Futaki S."/>
            <person name="Gariboldi M."/>
            <person name="Georgii-Hemming P."/>
            <person name="Gingeras T.R."/>
            <person name="Gojobori T."/>
            <person name="Green R.E."/>
            <person name="Gustincich S."/>
            <person name="Harbers M."/>
            <person name="Hayashi Y."/>
            <person name="Hensch T.K."/>
            <person name="Hirokawa N."/>
            <person name="Hill D."/>
            <person name="Huminiecki L."/>
            <person name="Iacono M."/>
            <person name="Ikeo K."/>
            <person name="Iwama A."/>
            <person name="Ishikawa T."/>
            <person name="Jakt M."/>
            <person name="Kanapin A."/>
            <person name="Katoh M."/>
            <person name="Kawasawa Y."/>
            <person name="Kelso J."/>
            <person name="Kitamura H."/>
            <person name="Kitano H."/>
            <person name="Kollias G."/>
            <person name="Krishnan S.P."/>
            <person name="Kruger A."/>
            <person name="Kummerfeld S.K."/>
            <person name="Kurochkin I.V."/>
            <person name="Lareau L.F."/>
            <person name="Lazarevic D."/>
            <person name="Lipovich L."/>
            <person name="Liu J."/>
            <person name="Liuni S."/>
            <person name="McWilliam S."/>
            <person name="Madan Babu M."/>
            <person name="Madera M."/>
            <person name="Marchionni L."/>
            <person name="Matsuda H."/>
            <person name="Matsuzawa S."/>
            <person name="Miki H."/>
            <person name="Mignone F."/>
            <person name="Miyake S."/>
            <person name="Morris K."/>
            <person name="Mottagui-Tabar S."/>
            <person name="Mulder N."/>
            <person name="Nakano N."/>
            <person name="Nakauchi H."/>
            <person name="Ng P."/>
            <person name="Nilsson R."/>
            <person name="Nishiguchi S."/>
            <person name="Nishikawa S."/>
            <person name="Nori F."/>
            <person name="Ohara O."/>
            <person name="Okazaki Y."/>
            <person name="Orlando V."/>
            <person name="Pang K.C."/>
            <person name="Pavan W.J."/>
            <person name="Pavesi G."/>
            <person name="Pesole G."/>
            <person name="Petrovsky N."/>
            <person name="Piazza S."/>
            <person name="Reed J."/>
            <person name="Reid J.F."/>
            <person name="Ring B.Z."/>
            <person name="Ringwald M."/>
            <person name="Rost B."/>
            <person name="Ruan Y."/>
            <person name="Salzberg S.L."/>
            <person name="Sandelin A."/>
            <person name="Schneider C."/>
            <person name="Schoenbach C."/>
            <person name="Sekiguchi K."/>
            <person name="Semple C.A."/>
            <person name="Seno S."/>
            <person name="Sessa L."/>
            <person name="Sheng Y."/>
            <person name="Shibata Y."/>
            <person name="Shimada H."/>
            <person name="Shimada K."/>
            <person name="Silva D."/>
            <person name="Sinclair B."/>
            <person name="Sperling S."/>
            <person name="Stupka E."/>
            <person name="Sugiura K."/>
            <person name="Sultana R."/>
            <person name="Takenaka Y."/>
            <person name="Taki K."/>
            <person name="Tammoja K."/>
            <person name="Tan S.L."/>
            <person name="Tang S."/>
            <person name="Taylor M.S."/>
            <person name="Tegner J."/>
            <person name="Teichmann S.A."/>
            <person name="Ueda H.R."/>
            <person name="van Nimwegen E."/>
            <person name="Verardo R."/>
            <person name="Wei C.L."/>
            <person name="Yagi K."/>
            <person name="Yamanishi H."/>
            <person name="Zabarovsky E."/>
            <person name="Zhu S."/>
            <person name="Zimmer A."/>
            <person name="Hide W."/>
            <person name="Bult C."/>
            <person name="Grimmond S.M."/>
            <person name="Teasdale R.D."/>
            <person name="Liu E.T."/>
            <person name="Brusic V."/>
            <person name="Quackenbush J."/>
            <person name="Wahlestedt C."/>
            <person name="Mattick J.S."/>
            <person name="Hume D.A."/>
            <person name="Kai C."/>
            <person name="Sasaki D."/>
            <person name="Tomaru Y."/>
            <person name="Fukuda S."/>
            <person name="Kanamori-Katayama M."/>
            <person name="Suzuki M."/>
            <person name="Aoki J."/>
            <person name="Arakawa T."/>
            <person name="Iida J."/>
            <person name="Imamura K."/>
            <person name="Itoh M."/>
            <person name="Kato T."/>
            <person name="Kawaji H."/>
            <person name="Kawagashira N."/>
            <person name="Kawashima T."/>
            <person name="Kojima M."/>
            <person name="Kondo S."/>
            <person name="Konno H."/>
            <person name="Nakano K."/>
            <person name="Ninomiya N."/>
            <person name="Nishio T."/>
            <person name="Okada M."/>
            <person name="Plessy C."/>
            <person name="Shibata K."/>
            <person name="Shiraki T."/>
            <person name="Suzuki S."/>
            <person name="Tagami M."/>
            <person name="Waki K."/>
            <person name="Watahiki A."/>
            <person name="Okamura-Oho Y."/>
            <person name="Suzuki H."/>
            <person name="Kawai J."/>
            <person name="Hayashizaki Y."/>
        </authorList>
    </citation>
    <scope>NUCLEOTIDE SEQUENCE [LARGE SCALE MRNA] OF 164-633</scope>
    <source>
        <strain>C57BL/6J</strain>
        <tissue>Stomach</tissue>
    </source>
</reference>
<reference key="4">
    <citation type="journal article" date="2010" name="Cell">
        <title>A tissue-specific atlas of mouse protein phosphorylation and expression.</title>
        <authorList>
            <person name="Huttlin E.L."/>
            <person name="Jedrychowski M.P."/>
            <person name="Elias J.E."/>
            <person name="Goswami T."/>
            <person name="Rad R."/>
            <person name="Beausoleil S.A."/>
            <person name="Villen J."/>
            <person name="Haas W."/>
            <person name="Sowa M.E."/>
            <person name="Gygi S.P."/>
        </authorList>
    </citation>
    <scope>PHOSPHORYLATION [LARGE SCALE ANALYSIS] AT SER-328; THR-330; SER-425; SER-443; THR-523; SER-525 AND SER-615</scope>
    <scope>IDENTIFICATION BY MASS SPECTROMETRY [LARGE SCALE ANALYSIS]</scope>
    <source>
        <tissue>Brain</tissue>
        <tissue>Brown adipose tissue</tissue>
    </source>
</reference>
<reference key="5">
    <citation type="journal article" date="2017" name="Glia">
        <title>Mice lacking BCAS1, a novel myelin-associated protein, display hypomyelination, schizophrenia-like abnormal behaviors, and upregulation of inflammatory genes in the brain.</title>
        <authorList>
            <person name="Ishimoto T."/>
            <person name="Ninomiya K."/>
            <person name="Inoue R."/>
            <person name="Koike M."/>
            <person name="Uchiyama Y."/>
            <person name="Mori H."/>
        </authorList>
    </citation>
    <scope>FUNCTION</scope>
    <scope>DISRUPTION PHENOTYPE</scope>
    <scope>TISSUE SPECIFICITY</scope>
</reference>
<reference key="6">
    <citation type="journal article" date="2017" name="Sci. Transl. Med.">
        <title>BCAS1 expression defines a population of early myelinating oligodendrocytes in multiple sclerosis lesions.</title>
        <authorList>
            <person name="Fard M.K."/>
            <person name="van der Meer F."/>
            <person name="Sanchez P."/>
            <person name="Cantuti-Castelvetri L."/>
            <person name="Mandad S."/>
            <person name="Jaekel S."/>
            <person name="Fornasiero E.F."/>
            <person name="Schmitt S."/>
            <person name="Ehrlich M."/>
            <person name="Starost L."/>
            <person name="Kuhlmann T."/>
            <person name="Sergiou C."/>
            <person name="Schultz V."/>
            <person name="Wrzos C."/>
            <person name="Brueck W."/>
            <person name="Urlaub H."/>
            <person name="Dimou L."/>
            <person name="Stadelmann C."/>
            <person name="Simons M."/>
        </authorList>
    </citation>
    <scope>TISSUE SPECIFICITY</scope>
</reference>
<proteinExistence type="evidence at protein level"/>
<keyword id="KW-0963">Cytoplasm</keyword>
<keyword id="KW-0597">Phosphoprotein</keyword>
<keyword id="KW-1185">Reference proteome</keyword>
<organism>
    <name type="scientific">Mus musculus</name>
    <name type="common">Mouse</name>
    <dbReference type="NCBI Taxonomy" id="10090"/>
    <lineage>
        <taxon>Eukaryota</taxon>
        <taxon>Metazoa</taxon>
        <taxon>Chordata</taxon>
        <taxon>Craniata</taxon>
        <taxon>Vertebrata</taxon>
        <taxon>Euteleostomi</taxon>
        <taxon>Mammalia</taxon>
        <taxon>Eutheria</taxon>
        <taxon>Euarchontoglires</taxon>
        <taxon>Glires</taxon>
        <taxon>Rodentia</taxon>
        <taxon>Myomorpha</taxon>
        <taxon>Muroidea</taxon>
        <taxon>Muridae</taxon>
        <taxon>Murinae</taxon>
        <taxon>Mus</taxon>
        <taxon>Mus</taxon>
    </lineage>
</organism>
<evidence type="ECO:0000250" key="1">
    <source>
        <dbReference type="UniProtKB" id="O75363"/>
    </source>
</evidence>
<evidence type="ECO:0000250" key="2">
    <source>
        <dbReference type="UniProtKB" id="Q3ZB98"/>
    </source>
</evidence>
<evidence type="ECO:0000256" key="3">
    <source>
        <dbReference type="SAM" id="MobiDB-lite"/>
    </source>
</evidence>
<evidence type="ECO:0000269" key="4">
    <source>
    </source>
</evidence>
<evidence type="ECO:0000269" key="5">
    <source>
    </source>
</evidence>
<evidence type="ECO:0000305" key="6"/>
<evidence type="ECO:0007744" key="7">
    <source>
    </source>
</evidence>
<protein>
    <recommendedName>
        <fullName>Breast carcinoma-amplified sequence 1 homolog</fullName>
    </recommendedName>
    <alternativeName>
        <fullName>Novel amplified in breast cancer 1 homolog</fullName>
    </alternativeName>
</protein>
<gene>
    <name type="primary">Bcas1</name>
    <name type="synonym">Nabc1</name>
</gene>
<comment type="function">
    <text evidence="4">Required for myelination.</text>
</comment>
<comment type="subunit">
    <text evidence="1 2">Homodimer. Interacts with DYNLL1 and DYNLL2.</text>
</comment>
<comment type="subcellular location">
    <subcellularLocation>
        <location evidence="2">Cytoplasm</location>
    </subcellularLocation>
</comment>
<comment type="tissue specificity">
    <text evidence="4 5">Highly expressed in the brain and, more specifically, in oligodendrocytes. Expressed in the Schwann cells (at protein level).</text>
</comment>
<comment type="disruption phenotype">
    <text evidence="4">Mice display hypomyelination, schizophrenia-like behavioral abnormalities and a tendency toward reduced anxiety-like behaviors and up-regulation of inflammatory genes in the brain.</text>
</comment>
<dbReference type="EMBL" id="AY219233">
    <property type="protein sequence ID" value="AAO88011.1"/>
    <property type="molecule type" value="mRNA"/>
</dbReference>
<dbReference type="EMBL" id="AL928812">
    <property type="status" value="NOT_ANNOTATED_CDS"/>
    <property type="molecule type" value="Genomic_DNA"/>
</dbReference>
<dbReference type="EMBL" id="AL935134">
    <property type="status" value="NOT_ANNOTATED_CDS"/>
    <property type="molecule type" value="Genomic_DNA"/>
</dbReference>
<dbReference type="EMBL" id="AK008957">
    <property type="protein sequence ID" value="BAB25989.1"/>
    <property type="molecule type" value="mRNA"/>
</dbReference>
<dbReference type="CCDS" id="CCDS17121.1"/>
<dbReference type="RefSeq" id="NP_084091.2">
    <property type="nucleotide sequence ID" value="NM_029815.2"/>
</dbReference>
<dbReference type="BioGRID" id="218429">
    <property type="interactions" value="5"/>
</dbReference>
<dbReference type="FunCoup" id="Q80YN3">
    <property type="interactions" value="218"/>
</dbReference>
<dbReference type="IntAct" id="Q80YN3">
    <property type="interactions" value="3"/>
</dbReference>
<dbReference type="MINT" id="Q80YN3"/>
<dbReference type="STRING" id="10090.ENSMUSP00000013667"/>
<dbReference type="GlyGen" id="Q80YN3">
    <property type="glycosylation" value="2 sites, 1 N-linked glycan (1 site), 1 O-linked glycan (1 site)"/>
</dbReference>
<dbReference type="iPTMnet" id="Q80YN3"/>
<dbReference type="PhosphoSitePlus" id="Q80YN3"/>
<dbReference type="SwissPalm" id="Q80YN3"/>
<dbReference type="PaxDb" id="10090-ENSMUSP00000013667"/>
<dbReference type="PeptideAtlas" id="Q80YN3"/>
<dbReference type="ProteomicsDB" id="277190"/>
<dbReference type="Antibodypedia" id="28750">
    <property type="antibodies" value="175 antibodies from 26 providers"/>
</dbReference>
<dbReference type="DNASU" id="76960"/>
<dbReference type="Ensembl" id="ENSMUST00000013667.3">
    <property type="protein sequence ID" value="ENSMUSP00000013667.3"/>
    <property type="gene ID" value="ENSMUSG00000013523.14"/>
</dbReference>
<dbReference type="GeneID" id="76960"/>
<dbReference type="KEGG" id="mmu:76960"/>
<dbReference type="UCSC" id="uc008obx.2">
    <property type="organism name" value="mouse"/>
</dbReference>
<dbReference type="AGR" id="MGI:1924210"/>
<dbReference type="CTD" id="8537"/>
<dbReference type="MGI" id="MGI:1924210">
    <property type="gene designation" value="Bcas1"/>
</dbReference>
<dbReference type="VEuPathDB" id="HostDB:ENSMUSG00000013523"/>
<dbReference type="eggNOG" id="ENOG502QTR2">
    <property type="taxonomic scope" value="Eukaryota"/>
</dbReference>
<dbReference type="GeneTree" id="ENSGT00390000003167"/>
<dbReference type="HOGENOM" id="CLU_031051_0_0_1"/>
<dbReference type="InParanoid" id="Q80YN3"/>
<dbReference type="OMA" id="SASVPHH"/>
<dbReference type="OrthoDB" id="8962384at2759"/>
<dbReference type="PhylomeDB" id="Q80YN3"/>
<dbReference type="TreeFam" id="TF335555"/>
<dbReference type="BioGRID-ORCS" id="76960">
    <property type="hits" value="3 hits in 78 CRISPR screens"/>
</dbReference>
<dbReference type="CD-CODE" id="CE726F99">
    <property type="entry name" value="Postsynaptic density"/>
</dbReference>
<dbReference type="ChiTaRS" id="Slc4a11">
    <property type="organism name" value="mouse"/>
</dbReference>
<dbReference type="PRO" id="PR:Q80YN3"/>
<dbReference type="Proteomes" id="UP000000589">
    <property type="component" value="Chromosome 2"/>
</dbReference>
<dbReference type="RNAct" id="Q80YN3">
    <property type="molecule type" value="protein"/>
</dbReference>
<dbReference type="Bgee" id="ENSMUSG00000013523">
    <property type="expression patterns" value="Expressed in cerebellar nuclear complex and 155 other cell types or tissues"/>
</dbReference>
<dbReference type="ExpressionAtlas" id="Q80YN3">
    <property type="expression patterns" value="baseline and differential"/>
</dbReference>
<dbReference type="GO" id="GO:0005737">
    <property type="term" value="C:cytoplasm"/>
    <property type="evidence" value="ECO:0000250"/>
    <property type="project" value="UniProtKB"/>
</dbReference>
<dbReference type="GO" id="GO:0005829">
    <property type="term" value="C:cytosol"/>
    <property type="evidence" value="ECO:0000266"/>
    <property type="project" value="MGI"/>
</dbReference>
<dbReference type="GO" id="GO:0042803">
    <property type="term" value="F:protein homodimerization activity"/>
    <property type="evidence" value="ECO:0000266"/>
    <property type="project" value="MGI"/>
</dbReference>
<dbReference type="GO" id="GO:0042552">
    <property type="term" value="P:myelination"/>
    <property type="evidence" value="ECO:0000315"/>
    <property type="project" value="UniProtKB"/>
</dbReference>
<dbReference type="InterPro" id="IPR026115">
    <property type="entry name" value="NABC1"/>
</dbReference>
<dbReference type="PANTHER" id="PTHR15016">
    <property type="entry name" value="BREAST CARCINOMA-AMPLIFIED SEQUENCE 1"/>
    <property type="match status" value="1"/>
</dbReference>
<dbReference type="PANTHER" id="PTHR15016:SF6">
    <property type="entry name" value="BREAST CARCINOMA-AMPLIFIED SEQUENCE 1"/>
    <property type="match status" value="1"/>
</dbReference>
<feature type="chain" id="PRO_0000235984" description="Breast carcinoma-amplified sequence 1 homolog">
    <location>
        <begin position="1"/>
        <end position="633"/>
    </location>
</feature>
<feature type="region of interest" description="Disordered" evidence="3">
    <location>
        <begin position="1"/>
        <end position="34"/>
    </location>
</feature>
<feature type="region of interest" description="Disordered" evidence="3">
    <location>
        <begin position="57"/>
        <end position="422"/>
    </location>
</feature>
<feature type="region of interest" description="Disordered" evidence="3">
    <location>
        <begin position="454"/>
        <end position="633"/>
    </location>
</feature>
<feature type="region of interest" description="Interacts with DYNLL1 AND DYNLL2" evidence="2">
    <location>
        <begin position="614"/>
        <end position="633"/>
    </location>
</feature>
<feature type="compositionally biased region" description="Polar residues" evidence="3">
    <location>
        <begin position="24"/>
        <end position="34"/>
    </location>
</feature>
<feature type="compositionally biased region" description="Polar residues" evidence="3">
    <location>
        <begin position="57"/>
        <end position="68"/>
    </location>
</feature>
<feature type="compositionally biased region" description="Polar residues" evidence="3">
    <location>
        <begin position="278"/>
        <end position="288"/>
    </location>
</feature>
<feature type="compositionally biased region" description="Basic and acidic residues" evidence="3">
    <location>
        <begin position="300"/>
        <end position="318"/>
    </location>
</feature>
<feature type="compositionally biased region" description="Polar residues" evidence="3">
    <location>
        <begin position="359"/>
        <end position="378"/>
    </location>
</feature>
<feature type="compositionally biased region" description="Basic and acidic residues" evidence="3">
    <location>
        <begin position="400"/>
        <end position="410"/>
    </location>
</feature>
<feature type="compositionally biased region" description="Basic and acidic residues" evidence="3">
    <location>
        <begin position="471"/>
        <end position="481"/>
    </location>
</feature>
<feature type="compositionally biased region" description="Polar residues" evidence="3">
    <location>
        <begin position="510"/>
        <end position="522"/>
    </location>
</feature>
<feature type="compositionally biased region" description="Basic and acidic residues" evidence="3">
    <location>
        <begin position="537"/>
        <end position="555"/>
    </location>
</feature>
<feature type="modified residue" description="Phosphoserine" evidence="2">
    <location>
        <position position="127"/>
    </location>
</feature>
<feature type="modified residue" description="Phosphoserine" evidence="7">
    <location>
        <position position="328"/>
    </location>
</feature>
<feature type="modified residue" description="Phosphothreonine" evidence="7">
    <location>
        <position position="330"/>
    </location>
</feature>
<feature type="modified residue" description="Phosphoserine" evidence="2">
    <location>
        <position position="360"/>
    </location>
</feature>
<feature type="modified residue" description="Phosphoserine" evidence="7">
    <location>
        <position position="425"/>
    </location>
</feature>
<feature type="modified residue" description="Phosphoserine" evidence="7">
    <location>
        <position position="443"/>
    </location>
</feature>
<feature type="modified residue" description="Phosphothreonine" evidence="7">
    <location>
        <position position="523"/>
    </location>
</feature>
<feature type="modified residue" description="Phosphoserine" evidence="7">
    <location>
        <position position="525"/>
    </location>
</feature>
<feature type="modified residue" description="Phosphoserine" evidence="2">
    <location>
        <position position="601"/>
    </location>
</feature>
<feature type="modified residue" description="Phosphoserine" evidence="7">
    <location>
        <position position="615"/>
    </location>
</feature>
<feature type="sequence conflict" description="In Ref. 1; AAO88011." evidence="6" ref="1">
    <original>G</original>
    <variation>E</variation>
    <location>
        <position position="122"/>
    </location>
</feature>
<feature type="sequence conflict" description="In Ref. 3; BAB25989." evidence="6" ref="3">
    <original>Q</original>
    <variation>E</variation>
    <location>
        <position position="164"/>
    </location>
</feature>
<feature type="sequence conflict" description="In Ref. 1; AAO88011." evidence="6" ref="1">
    <original>H</original>
    <variation>R</variation>
    <location>
        <position position="354"/>
    </location>
</feature>
<feature type="sequence conflict" description="In Ref. 1; AAO88011." evidence="6" ref="1">
    <original>P</original>
    <variation>S</variation>
    <location>
        <position position="396"/>
    </location>
</feature>
<feature type="sequence conflict" description="In Ref. 1; AAO88011." evidence="6" ref="1">
    <original>S</original>
    <variation>L</variation>
    <location>
        <position position="414"/>
    </location>
</feature>
<name>BCAS1_MOUSE</name>
<accession>Q80YN3</accession>
<accession>A2AVX2</accession>
<accession>Q9CVA1</accession>